<sequence length="229" mass="23947">MAKLTKKMKAIKAGVDSTKAYEINEAIAVLKQFATAKFVESVDVAVNLGIDPRKSDQNVRGATVLPHGTGRTARVAVFTQGANAEAAKAAGADLVGMEDLAEQIKKGEMNFDVVIASPDAMRVVGQLGQVLGPRGLMPNPKVGTVTPNVAEAVKNAKSGQIRYRNDKNGIIHTTIGKADFAPEQLKDNLVALLAALNKAKPTTAKGIFIKKVSISTTMGAGVAVDQASL</sequence>
<dbReference type="EMBL" id="CP000569">
    <property type="protein sequence ID" value="ABN74803.1"/>
    <property type="molecule type" value="Genomic_DNA"/>
</dbReference>
<dbReference type="RefSeq" id="WP_005599212.1">
    <property type="nucleotide sequence ID" value="NC_009053.1"/>
</dbReference>
<dbReference type="SMR" id="A3N317"/>
<dbReference type="STRING" id="416269.APL_1719"/>
<dbReference type="EnsemblBacteria" id="ABN74803">
    <property type="protein sequence ID" value="ABN74803"/>
    <property type="gene ID" value="APL_1719"/>
</dbReference>
<dbReference type="GeneID" id="92743717"/>
<dbReference type="KEGG" id="apl:APL_1719"/>
<dbReference type="eggNOG" id="COG0081">
    <property type="taxonomic scope" value="Bacteria"/>
</dbReference>
<dbReference type="HOGENOM" id="CLU_062853_0_0_6"/>
<dbReference type="Proteomes" id="UP000001432">
    <property type="component" value="Chromosome"/>
</dbReference>
<dbReference type="GO" id="GO:0022625">
    <property type="term" value="C:cytosolic large ribosomal subunit"/>
    <property type="evidence" value="ECO:0007669"/>
    <property type="project" value="TreeGrafter"/>
</dbReference>
<dbReference type="GO" id="GO:0019843">
    <property type="term" value="F:rRNA binding"/>
    <property type="evidence" value="ECO:0007669"/>
    <property type="project" value="UniProtKB-UniRule"/>
</dbReference>
<dbReference type="GO" id="GO:0003735">
    <property type="term" value="F:structural constituent of ribosome"/>
    <property type="evidence" value="ECO:0007669"/>
    <property type="project" value="InterPro"/>
</dbReference>
<dbReference type="GO" id="GO:0000049">
    <property type="term" value="F:tRNA binding"/>
    <property type="evidence" value="ECO:0007669"/>
    <property type="project" value="UniProtKB-KW"/>
</dbReference>
<dbReference type="GO" id="GO:0006417">
    <property type="term" value="P:regulation of translation"/>
    <property type="evidence" value="ECO:0007669"/>
    <property type="project" value="UniProtKB-KW"/>
</dbReference>
<dbReference type="GO" id="GO:0006412">
    <property type="term" value="P:translation"/>
    <property type="evidence" value="ECO:0007669"/>
    <property type="project" value="UniProtKB-UniRule"/>
</dbReference>
<dbReference type="CDD" id="cd00403">
    <property type="entry name" value="Ribosomal_L1"/>
    <property type="match status" value="1"/>
</dbReference>
<dbReference type="FunFam" id="3.40.50.790:FF:000001">
    <property type="entry name" value="50S ribosomal protein L1"/>
    <property type="match status" value="1"/>
</dbReference>
<dbReference type="Gene3D" id="3.30.190.20">
    <property type="match status" value="1"/>
</dbReference>
<dbReference type="Gene3D" id="3.40.50.790">
    <property type="match status" value="1"/>
</dbReference>
<dbReference type="HAMAP" id="MF_01318_B">
    <property type="entry name" value="Ribosomal_uL1_B"/>
    <property type="match status" value="1"/>
</dbReference>
<dbReference type="InterPro" id="IPR005878">
    <property type="entry name" value="Ribosom_uL1_bac-type"/>
</dbReference>
<dbReference type="InterPro" id="IPR002143">
    <property type="entry name" value="Ribosomal_uL1"/>
</dbReference>
<dbReference type="InterPro" id="IPR023674">
    <property type="entry name" value="Ribosomal_uL1-like"/>
</dbReference>
<dbReference type="InterPro" id="IPR028364">
    <property type="entry name" value="Ribosomal_uL1/biogenesis"/>
</dbReference>
<dbReference type="InterPro" id="IPR016095">
    <property type="entry name" value="Ribosomal_uL1_3-a/b-sand"/>
</dbReference>
<dbReference type="InterPro" id="IPR023673">
    <property type="entry name" value="Ribosomal_uL1_CS"/>
</dbReference>
<dbReference type="NCBIfam" id="TIGR01169">
    <property type="entry name" value="rplA_bact"/>
    <property type="match status" value="1"/>
</dbReference>
<dbReference type="PANTHER" id="PTHR36427">
    <property type="entry name" value="54S RIBOSOMAL PROTEIN L1, MITOCHONDRIAL"/>
    <property type="match status" value="1"/>
</dbReference>
<dbReference type="PANTHER" id="PTHR36427:SF3">
    <property type="entry name" value="LARGE RIBOSOMAL SUBUNIT PROTEIN UL1M"/>
    <property type="match status" value="1"/>
</dbReference>
<dbReference type="Pfam" id="PF00687">
    <property type="entry name" value="Ribosomal_L1"/>
    <property type="match status" value="1"/>
</dbReference>
<dbReference type="PIRSF" id="PIRSF002155">
    <property type="entry name" value="Ribosomal_L1"/>
    <property type="match status" value="1"/>
</dbReference>
<dbReference type="SUPFAM" id="SSF56808">
    <property type="entry name" value="Ribosomal protein L1"/>
    <property type="match status" value="1"/>
</dbReference>
<dbReference type="PROSITE" id="PS01199">
    <property type="entry name" value="RIBOSOMAL_L1"/>
    <property type="match status" value="1"/>
</dbReference>
<reference key="1">
    <citation type="journal article" date="2008" name="J. Bacteriol.">
        <title>The complete genome sequence of Actinobacillus pleuropneumoniae L20 (serotype 5b).</title>
        <authorList>
            <person name="Foote S.J."/>
            <person name="Bosse J.T."/>
            <person name="Bouevitch A.B."/>
            <person name="Langford P.R."/>
            <person name="Young N.M."/>
            <person name="Nash J.H.E."/>
        </authorList>
    </citation>
    <scope>NUCLEOTIDE SEQUENCE [LARGE SCALE GENOMIC DNA]</scope>
    <source>
        <strain>L20</strain>
    </source>
</reference>
<evidence type="ECO:0000255" key="1">
    <source>
        <dbReference type="HAMAP-Rule" id="MF_01318"/>
    </source>
</evidence>
<evidence type="ECO:0000305" key="2"/>
<feature type="chain" id="PRO_0000307952" description="Large ribosomal subunit protein uL1">
    <location>
        <begin position="1"/>
        <end position="229"/>
    </location>
</feature>
<keyword id="KW-1185">Reference proteome</keyword>
<keyword id="KW-0678">Repressor</keyword>
<keyword id="KW-0687">Ribonucleoprotein</keyword>
<keyword id="KW-0689">Ribosomal protein</keyword>
<keyword id="KW-0694">RNA-binding</keyword>
<keyword id="KW-0699">rRNA-binding</keyword>
<keyword id="KW-0810">Translation regulation</keyword>
<keyword id="KW-0820">tRNA-binding</keyword>
<accession>A3N317</accession>
<organism>
    <name type="scientific">Actinobacillus pleuropneumoniae serotype 5b (strain L20)</name>
    <dbReference type="NCBI Taxonomy" id="416269"/>
    <lineage>
        <taxon>Bacteria</taxon>
        <taxon>Pseudomonadati</taxon>
        <taxon>Pseudomonadota</taxon>
        <taxon>Gammaproteobacteria</taxon>
        <taxon>Pasteurellales</taxon>
        <taxon>Pasteurellaceae</taxon>
        <taxon>Actinobacillus</taxon>
    </lineage>
</organism>
<protein>
    <recommendedName>
        <fullName evidence="1">Large ribosomal subunit protein uL1</fullName>
    </recommendedName>
    <alternativeName>
        <fullName evidence="2">50S ribosomal protein L1</fullName>
    </alternativeName>
</protein>
<comment type="function">
    <text evidence="1">Binds directly to 23S rRNA. The L1 stalk is quite mobile in the ribosome, and is involved in E site tRNA release.</text>
</comment>
<comment type="function">
    <text evidence="1">Protein L1 is also a translational repressor protein, it controls the translation of the L11 operon by binding to its mRNA.</text>
</comment>
<comment type="subunit">
    <text evidence="1">Part of the 50S ribosomal subunit.</text>
</comment>
<comment type="similarity">
    <text evidence="1">Belongs to the universal ribosomal protein uL1 family.</text>
</comment>
<name>RL1_ACTP2</name>
<gene>
    <name evidence="1" type="primary">rplA</name>
    <name type="ordered locus">APL_1719</name>
</gene>
<proteinExistence type="inferred from homology"/>